<proteinExistence type="inferred from homology"/>
<organism>
    <name type="scientific">Haemophilus influenzae (strain PittGG)</name>
    <dbReference type="NCBI Taxonomy" id="374931"/>
    <lineage>
        <taxon>Bacteria</taxon>
        <taxon>Pseudomonadati</taxon>
        <taxon>Pseudomonadota</taxon>
        <taxon>Gammaproteobacteria</taxon>
        <taxon>Pasteurellales</taxon>
        <taxon>Pasteurellaceae</taxon>
        <taxon>Haemophilus</taxon>
    </lineage>
</organism>
<sequence>MSKEKFERTKPHVNVGTIGHVDHGKTTLTAAITTVLAKHYGGAARAFDQIDNAPEEKARGITINTSHVEYDTPTRHYAHVDCPGHADYVKNMITGAAQMDGAILVVAATDGPMPQTREHILLGRQVGVPYIIVFLNKCDMVDDEELLELVEMEVRELLSQYDFPGDDTPIVRGSALQALNGVAEWEEKILELANHLDTYIPEPERAIDQPFLLPIEDVFSISGRGTVVTGRVERGIIRTGDEVEIVGIKDTAKTTVTGVEMFRKLLDEGRAGENIGALLRGTKREEIERGQVLAKPGSITPHTDFESEVYVLSKDEGGRHTPFFKGYRPQFYFRTTDVTGTIELPEGVEMVMPGDNIKMTVSLIHPIAMDQGLRFAIREGGRTVGAGVVAKIIK</sequence>
<evidence type="ECO:0000250" key="1"/>
<evidence type="ECO:0000255" key="2">
    <source>
        <dbReference type="HAMAP-Rule" id="MF_00118"/>
    </source>
</evidence>
<protein>
    <recommendedName>
        <fullName evidence="2">Elongation factor Tu</fullName>
        <shortName evidence="2">EF-Tu</shortName>
        <ecNumber evidence="2">3.6.5.3</ecNumber>
    </recommendedName>
</protein>
<feature type="chain" id="PRO_1000015671" description="Elongation factor Tu">
    <location>
        <begin position="1"/>
        <end position="394"/>
    </location>
</feature>
<feature type="domain" description="tr-type G">
    <location>
        <begin position="10"/>
        <end position="204"/>
    </location>
</feature>
<feature type="region of interest" description="G1" evidence="1">
    <location>
        <begin position="19"/>
        <end position="26"/>
    </location>
</feature>
<feature type="region of interest" description="G2" evidence="1">
    <location>
        <begin position="60"/>
        <end position="64"/>
    </location>
</feature>
<feature type="region of interest" description="G3" evidence="1">
    <location>
        <begin position="81"/>
        <end position="84"/>
    </location>
</feature>
<feature type="region of interest" description="G4" evidence="1">
    <location>
        <begin position="136"/>
        <end position="139"/>
    </location>
</feature>
<feature type="region of interest" description="G5" evidence="1">
    <location>
        <begin position="174"/>
        <end position="176"/>
    </location>
</feature>
<feature type="binding site" evidence="2">
    <location>
        <begin position="19"/>
        <end position="26"/>
    </location>
    <ligand>
        <name>GTP</name>
        <dbReference type="ChEBI" id="CHEBI:37565"/>
    </ligand>
</feature>
<feature type="binding site" evidence="2">
    <location>
        <position position="26"/>
    </location>
    <ligand>
        <name>Mg(2+)</name>
        <dbReference type="ChEBI" id="CHEBI:18420"/>
    </ligand>
</feature>
<feature type="binding site" evidence="2">
    <location>
        <begin position="81"/>
        <end position="85"/>
    </location>
    <ligand>
        <name>GTP</name>
        <dbReference type="ChEBI" id="CHEBI:37565"/>
    </ligand>
</feature>
<feature type="binding site" evidence="2">
    <location>
        <begin position="136"/>
        <end position="139"/>
    </location>
    <ligand>
        <name>GTP</name>
        <dbReference type="ChEBI" id="CHEBI:37565"/>
    </ligand>
</feature>
<keyword id="KW-0963">Cytoplasm</keyword>
<keyword id="KW-0251">Elongation factor</keyword>
<keyword id="KW-0342">GTP-binding</keyword>
<keyword id="KW-0378">Hydrolase</keyword>
<keyword id="KW-0460">Magnesium</keyword>
<keyword id="KW-0479">Metal-binding</keyword>
<keyword id="KW-0547">Nucleotide-binding</keyword>
<keyword id="KW-0648">Protein biosynthesis</keyword>
<name>EFTU_HAEIG</name>
<dbReference type="EC" id="3.6.5.3" evidence="2"/>
<dbReference type="EMBL" id="CP000672">
    <property type="protein sequence ID" value="ABR00177.1"/>
    <property type="molecule type" value="Genomic_DNA"/>
</dbReference>
<dbReference type="SMR" id="A5UHC1"/>
<dbReference type="KEGG" id="hiq:CGSHiGG_06410"/>
<dbReference type="HOGENOM" id="CLU_007265_0_2_6"/>
<dbReference type="Proteomes" id="UP000001990">
    <property type="component" value="Chromosome"/>
</dbReference>
<dbReference type="GO" id="GO:0005829">
    <property type="term" value="C:cytosol"/>
    <property type="evidence" value="ECO:0007669"/>
    <property type="project" value="TreeGrafter"/>
</dbReference>
<dbReference type="GO" id="GO:0005525">
    <property type="term" value="F:GTP binding"/>
    <property type="evidence" value="ECO:0007669"/>
    <property type="project" value="UniProtKB-UniRule"/>
</dbReference>
<dbReference type="GO" id="GO:0003924">
    <property type="term" value="F:GTPase activity"/>
    <property type="evidence" value="ECO:0007669"/>
    <property type="project" value="InterPro"/>
</dbReference>
<dbReference type="GO" id="GO:0097216">
    <property type="term" value="F:guanosine tetraphosphate binding"/>
    <property type="evidence" value="ECO:0007669"/>
    <property type="project" value="UniProtKB-ARBA"/>
</dbReference>
<dbReference type="GO" id="GO:0003746">
    <property type="term" value="F:translation elongation factor activity"/>
    <property type="evidence" value="ECO:0007669"/>
    <property type="project" value="UniProtKB-UniRule"/>
</dbReference>
<dbReference type="CDD" id="cd01884">
    <property type="entry name" value="EF_Tu"/>
    <property type="match status" value="1"/>
</dbReference>
<dbReference type="CDD" id="cd03697">
    <property type="entry name" value="EFTU_II"/>
    <property type="match status" value="1"/>
</dbReference>
<dbReference type="CDD" id="cd03707">
    <property type="entry name" value="EFTU_III"/>
    <property type="match status" value="1"/>
</dbReference>
<dbReference type="FunFam" id="2.40.30.10:FF:000001">
    <property type="entry name" value="Elongation factor Tu"/>
    <property type="match status" value="1"/>
</dbReference>
<dbReference type="FunFam" id="3.40.50.300:FF:000003">
    <property type="entry name" value="Elongation factor Tu"/>
    <property type="match status" value="1"/>
</dbReference>
<dbReference type="Gene3D" id="3.40.50.300">
    <property type="entry name" value="P-loop containing nucleotide triphosphate hydrolases"/>
    <property type="match status" value="1"/>
</dbReference>
<dbReference type="Gene3D" id="2.40.30.10">
    <property type="entry name" value="Translation factors"/>
    <property type="match status" value="2"/>
</dbReference>
<dbReference type="HAMAP" id="MF_00118_B">
    <property type="entry name" value="EF_Tu_B"/>
    <property type="match status" value="1"/>
</dbReference>
<dbReference type="InterPro" id="IPR041709">
    <property type="entry name" value="EF-Tu_GTP-bd"/>
</dbReference>
<dbReference type="InterPro" id="IPR050055">
    <property type="entry name" value="EF-Tu_GTPase"/>
</dbReference>
<dbReference type="InterPro" id="IPR004161">
    <property type="entry name" value="EFTu-like_2"/>
</dbReference>
<dbReference type="InterPro" id="IPR033720">
    <property type="entry name" value="EFTU_2"/>
</dbReference>
<dbReference type="InterPro" id="IPR031157">
    <property type="entry name" value="G_TR_CS"/>
</dbReference>
<dbReference type="InterPro" id="IPR027417">
    <property type="entry name" value="P-loop_NTPase"/>
</dbReference>
<dbReference type="InterPro" id="IPR005225">
    <property type="entry name" value="Small_GTP-bd"/>
</dbReference>
<dbReference type="InterPro" id="IPR000795">
    <property type="entry name" value="T_Tr_GTP-bd_dom"/>
</dbReference>
<dbReference type="InterPro" id="IPR009000">
    <property type="entry name" value="Transl_B-barrel_sf"/>
</dbReference>
<dbReference type="InterPro" id="IPR009001">
    <property type="entry name" value="Transl_elong_EF1A/Init_IF2_C"/>
</dbReference>
<dbReference type="InterPro" id="IPR004541">
    <property type="entry name" value="Transl_elong_EFTu/EF1A_bac/org"/>
</dbReference>
<dbReference type="InterPro" id="IPR004160">
    <property type="entry name" value="Transl_elong_EFTu/EF1A_C"/>
</dbReference>
<dbReference type="NCBIfam" id="TIGR00485">
    <property type="entry name" value="EF-Tu"/>
    <property type="match status" value="1"/>
</dbReference>
<dbReference type="NCBIfam" id="NF000766">
    <property type="entry name" value="PRK00049.1"/>
    <property type="match status" value="1"/>
</dbReference>
<dbReference type="NCBIfam" id="NF009372">
    <property type="entry name" value="PRK12735.1"/>
    <property type="match status" value="1"/>
</dbReference>
<dbReference type="NCBIfam" id="NF009373">
    <property type="entry name" value="PRK12736.1"/>
    <property type="match status" value="1"/>
</dbReference>
<dbReference type="NCBIfam" id="TIGR00231">
    <property type="entry name" value="small_GTP"/>
    <property type="match status" value="1"/>
</dbReference>
<dbReference type="PANTHER" id="PTHR43721:SF22">
    <property type="entry name" value="ELONGATION FACTOR TU, MITOCHONDRIAL"/>
    <property type="match status" value="1"/>
</dbReference>
<dbReference type="PANTHER" id="PTHR43721">
    <property type="entry name" value="ELONGATION FACTOR TU-RELATED"/>
    <property type="match status" value="1"/>
</dbReference>
<dbReference type="Pfam" id="PF00009">
    <property type="entry name" value="GTP_EFTU"/>
    <property type="match status" value="1"/>
</dbReference>
<dbReference type="Pfam" id="PF03144">
    <property type="entry name" value="GTP_EFTU_D2"/>
    <property type="match status" value="1"/>
</dbReference>
<dbReference type="Pfam" id="PF03143">
    <property type="entry name" value="GTP_EFTU_D3"/>
    <property type="match status" value="1"/>
</dbReference>
<dbReference type="PRINTS" id="PR00315">
    <property type="entry name" value="ELONGATNFCT"/>
</dbReference>
<dbReference type="SUPFAM" id="SSF50465">
    <property type="entry name" value="EF-Tu/eEF-1alpha/eIF2-gamma C-terminal domain"/>
    <property type="match status" value="1"/>
</dbReference>
<dbReference type="SUPFAM" id="SSF52540">
    <property type="entry name" value="P-loop containing nucleoside triphosphate hydrolases"/>
    <property type="match status" value="1"/>
</dbReference>
<dbReference type="SUPFAM" id="SSF50447">
    <property type="entry name" value="Translation proteins"/>
    <property type="match status" value="1"/>
</dbReference>
<dbReference type="PROSITE" id="PS00301">
    <property type="entry name" value="G_TR_1"/>
    <property type="match status" value="1"/>
</dbReference>
<dbReference type="PROSITE" id="PS51722">
    <property type="entry name" value="G_TR_2"/>
    <property type="match status" value="1"/>
</dbReference>
<accession>A5UHC1</accession>
<comment type="function">
    <text evidence="2">GTP hydrolase that promotes the GTP-dependent binding of aminoacyl-tRNA to the A-site of ribosomes during protein biosynthesis.</text>
</comment>
<comment type="catalytic activity">
    <reaction evidence="2">
        <text>GTP + H2O = GDP + phosphate + H(+)</text>
        <dbReference type="Rhea" id="RHEA:19669"/>
        <dbReference type="ChEBI" id="CHEBI:15377"/>
        <dbReference type="ChEBI" id="CHEBI:15378"/>
        <dbReference type="ChEBI" id="CHEBI:37565"/>
        <dbReference type="ChEBI" id="CHEBI:43474"/>
        <dbReference type="ChEBI" id="CHEBI:58189"/>
        <dbReference type="EC" id="3.6.5.3"/>
    </reaction>
    <physiologicalReaction direction="left-to-right" evidence="2">
        <dbReference type="Rhea" id="RHEA:19670"/>
    </physiologicalReaction>
</comment>
<comment type="subunit">
    <text evidence="2">Monomer.</text>
</comment>
<comment type="subcellular location">
    <subcellularLocation>
        <location evidence="2">Cytoplasm</location>
    </subcellularLocation>
</comment>
<comment type="similarity">
    <text evidence="2">Belongs to the TRAFAC class translation factor GTPase superfamily. Classic translation factor GTPase family. EF-Tu/EF-1A subfamily.</text>
</comment>
<gene>
    <name evidence="2" type="primary">tuf</name>
    <name type="ordered locus">CGSHiGG_06410</name>
</gene>
<reference key="1">
    <citation type="journal article" date="2007" name="Genome Biol.">
        <title>Characterization and modeling of the Haemophilus influenzae core and supragenomes based on the complete genomic sequences of Rd and 12 clinical nontypeable strains.</title>
        <authorList>
            <person name="Hogg J.S."/>
            <person name="Hu F.Z."/>
            <person name="Janto B."/>
            <person name="Boissy R."/>
            <person name="Hayes J."/>
            <person name="Keefe R."/>
            <person name="Post J.C."/>
            <person name="Ehrlich G.D."/>
        </authorList>
    </citation>
    <scope>NUCLEOTIDE SEQUENCE [LARGE SCALE GENOMIC DNA]</scope>
    <source>
        <strain>PittGG</strain>
    </source>
</reference>